<dbReference type="EMBL" id="M80826">
    <property type="protein sequence ID" value="AAA42270.1"/>
    <property type="molecule type" value="mRNA"/>
</dbReference>
<dbReference type="EMBL" id="S49317">
    <property type="protein sequence ID" value="AAB24079.2"/>
    <property type="molecule type" value="mRNA"/>
</dbReference>
<dbReference type="EMBL" id="U48825">
    <property type="protein sequence ID" value="AAC52439.1"/>
    <property type="molecule type" value="mRNA"/>
</dbReference>
<dbReference type="EMBL" id="BC078873">
    <property type="protein sequence ID" value="AAH78873.1"/>
    <property type="molecule type" value="mRNA"/>
</dbReference>
<dbReference type="EMBL" id="X66956">
    <property type="protein sequence ID" value="CAA47378.1"/>
    <property type="molecule type" value="mRNA"/>
</dbReference>
<dbReference type="EMBL" id="U20984">
    <property type="protein sequence ID" value="AAB01063.1"/>
    <property type="molecule type" value="Genomic_DNA"/>
</dbReference>
<dbReference type="EMBL" id="AF012534">
    <property type="protein sequence ID" value="AAB71352.1"/>
    <property type="molecule type" value="mRNA"/>
</dbReference>
<dbReference type="PIR" id="A41441">
    <property type="entry name" value="A41441"/>
</dbReference>
<dbReference type="PIR" id="A56366">
    <property type="entry name" value="A56366"/>
</dbReference>
<dbReference type="PIR" id="JC5623">
    <property type="entry name" value="JC5623"/>
</dbReference>
<dbReference type="PIR" id="S23963">
    <property type="entry name" value="S23963"/>
</dbReference>
<dbReference type="RefSeq" id="NP_037174.2">
    <property type="nucleotide sequence ID" value="NM_013042.2"/>
</dbReference>
<dbReference type="SMR" id="Q03191"/>
<dbReference type="FunCoup" id="Q03191">
    <property type="interactions" value="3"/>
</dbReference>
<dbReference type="STRING" id="10116.ENSRNOP00000060620"/>
<dbReference type="PaxDb" id="10116-ENSRNOP00000060620"/>
<dbReference type="GeneID" id="25563"/>
<dbReference type="KEGG" id="rno:25563"/>
<dbReference type="UCSC" id="RGD:3847">
    <property type="organism name" value="rat"/>
</dbReference>
<dbReference type="AGR" id="RGD:3847"/>
<dbReference type="CTD" id="7033"/>
<dbReference type="RGD" id="3847">
    <property type="gene designation" value="Tff3"/>
</dbReference>
<dbReference type="eggNOG" id="ENOG502SV7V">
    <property type="taxonomic scope" value="Eukaryota"/>
</dbReference>
<dbReference type="InParanoid" id="Q03191"/>
<dbReference type="OrthoDB" id="45477at9989"/>
<dbReference type="PhylomeDB" id="Q03191"/>
<dbReference type="TreeFam" id="TF336092"/>
<dbReference type="PRO" id="PR:Q03191"/>
<dbReference type="Proteomes" id="UP000002494">
    <property type="component" value="Unplaced"/>
</dbReference>
<dbReference type="GO" id="GO:0005576">
    <property type="term" value="C:extracellular region"/>
    <property type="evidence" value="ECO:0000266"/>
    <property type="project" value="RGD"/>
</dbReference>
<dbReference type="GO" id="GO:0005615">
    <property type="term" value="C:extracellular space"/>
    <property type="evidence" value="ECO:0000318"/>
    <property type="project" value="GO_Central"/>
</dbReference>
<dbReference type="GO" id="GO:0030141">
    <property type="term" value="C:secretory granule"/>
    <property type="evidence" value="ECO:0000266"/>
    <property type="project" value="RGD"/>
</dbReference>
<dbReference type="GO" id="GO:0042802">
    <property type="term" value="F:identical protein binding"/>
    <property type="evidence" value="ECO:0000266"/>
    <property type="project" value="RGD"/>
</dbReference>
<dbReference type="GO" id="GO:0030277">
    <property type="term" value="P:maintenance of gastrointestinal epithelium"/>
    <property type="evidence" value="ECO:0000318"/>
    <property type="project" value="GO_Central"/>
</dbReference>
<dbReference type="GO" id="GO:0010906">
    <property type="term" value="P:regulation of glucose metabolic process"/>
    <property type="evidence" value="ECO:0000266"/>
    <property type="project" value="RGD"/>
</dbReference>
<dbReference type="GO" id="GO:0043434">
    <property type="term" value="P:response to peptide hormone"/>
    <property type="evidence" value="ECO:0000270"/>
    <property type="project" value="RGD"/>
</dbReference>
<dbReference type="CDD" id="cd00111">
    <property type="entry name" value="Trefoil"/>
    <property type="match status" value="1"/>
</dbReference>
<dbReference type="FunFam" id="4.10.110.10:FF:000001">
    <property type="entry name" value="Trefoil factor 3"/>
    <property type="match status" value="1"/>
</dbReference>
<dbReference type="Gene3D" id="4.10.110.10">
    <property type="entry name" value="Spasmolytic Protein, domain 1"/>
    <property type="match status" value="1"/>
</dbReference>
<dbReference type="InterPro" id="IPR017994">
    <property type="entry name" value="P_trefoil_chordata"/>
</dbReference>
<dbReference type="InterPro" id="IPR017957">
    <property type="entry name" value="P_trefoil_CS"/>
</dbReference>
<dbReference type="InterPro" id="IPR000519">
    <property type="entry name" value="P_trefoil_dom"/>
</dbReference>
<dbReference type="InterPro" id="IPR044913">
    <property type="entry name" value="P_trefoil_dom_sf"/>
</dbReference>
<dbReference type="PANTHER" id="PTHR13826">
    <property type="entry name" value="INTESTINAL TREFOIL FACTOR-RELATED"/>
    <property type="match status" value="1"/>
</dbReference>
<dbReference type="PANTHER" id="PTHR13826:SF16">
    <property type="entry name" value="TREFOIL FACTOR 3"/>
    <property type="match status" value="1"/>
</dbReference>
<dbReference type="Pfam" id="PF00088">
    <property type="entry name" value="Trefoil"/>
    <property type="match status" value="1"/>
</dbReference>
<dbReference type="PRINTS" id="PR00680">
    <property type="entry name" value="PTREFOIL"/>
</dbReference>
<dbReference type="SMART" id="SM00018">
    <property type="entry name" value="PD"/>
    <property type="match status" value="1"/>
</dbReference>
<dbReference type="SUPFAM" id="SSF57492">
    <property type="entry name" value="Trefoil"/>
    <property type="match status" value="1"/>
</dbReference>
<dbReference type="PROSITE" id="PS00025">
    <property type="entry name" value="P_TREFOIL_1"/>
    <property type="match status" value="1"/>
</dbReference>
<dbReference type="PROSITE" id="PS51448">
    <property type="entry name" value="P_TREFOIL_2"/>
    <property type="match status" value="1"/>
</dbReference>
<organism>
    <name type="scientific">Rattus norvegicus</name>
    <name type="common">Rat</name>
    <dbReference type="NCBI Taxonomy" id="10116"/>
    <lineage>
        <taxon>Eukaryota</taxon>
        <taxon>Metazoa</taxon>
        <taxon>Chordata</taxon>
        <taxon>Craniata</taxon>
        <taxon>Vertebrata</taxon>
        <taxon>Euteleostomi</taxon>
        <taxon>Mammalia</taxon>
        <taxon>Eutheria</taxon>
        <taxon>Euarchontoglires</taxon>
        <taxon>Glires</taxon>
        <taxon>Rodentia</taxon>
        <taxon>Myomorpha</taxon>
        <taxon>Muroidea</taxon>
        <taxon>Muridae</taxon>
        <taxon>Murinae</taxon>
        <taxon>Rattus</taxon>
    </lineage>
</organism>
<gene>
    <name type="primary">Tff3</name>
    <name type="synonym">Itf</name>
</gene>
<feature type="signal peptide" evidence="3">
    <location>
        <begin position="1"/>
        <end position="22"/>
    </location>
</feature>
<feature type="chain" id="PRO_0000023467" description="Trefoil factor 3">
    <location>
        <begin position="23"/>
        <end position="81"/>
    </location>
</feature>
<feature type="domain" description="P-type" evidence="4">
    <location>
        <begin position="31"/>
        <end position="74"/>
    </location>
</feature>
<feature type="disulfide bond" evidence="4">
    <location>
        <begin position="33"/>
        <end position="59"/>
    </location>
</feature>
<feature type="disulfide bond" evidence="4">
    <location>
        <begin position="43"/>
        <end position="58"/>
    </location>
</feature>
<feature type="disulfide bond" evidence="4">
    <location>
        <begin position="53"/>
        <end position="70"/>
    </location>
</feature>
<feature type="disulfide bond" description="Interchain" evidence="4">
    <location>
        <position position="79"/>
    </location>
</feature>
<feature type="sequence conflict" description="In Ref. 3; AAC52439, 4; AAH78873 and 6; AAB01063." evidence="11" ref="3 4 6">
    <original>T</original>
    <variation>I</variation>
    <location>
        <position position="8"/>
    </location>
</feature>
<feature type="sequence conflict" description="In Ref. 1; AAA42270." evidence="11" ref="1">
    <original>V</original>
    <variation>A</variation>
    <location>
        <position position="35"/>
    </location>
</feature>
<feature type="sequence conflict" description="In Ref. 1; AAA42270." evidence="11" ref="1">
    <original>A</original>
    <variation>T</variation>
    <location>
        <position position="37"/>
    </location>
</feature>
<feature type="sequence conflict" description="In Ref. 1; AAA42270." evidence="11" ref="1">
    <original>G</original>
    <variation>N</variation>
    <location>
        <position position="44"/>
    </location>
</feature>
<feature type="sequence conflict" description="In Ref. 2; AAB24079." evidence="11" ref="2">
    <original>F</original>
    <variation>LDPA</variation>
    <location>
        <position position="81"/>
    </location>
</feature>
<sequence>METRAFWTTLLLVLVAGSSCKAQEFVGLSPSQCMVPANVRVDCGYPTVTSEQCNNRGCCFDSSIPNVPWCFKPLQETECTF</sequence>
<name>TFF3_RAT</name>
<reference key="1">
    <citation type="journal article" date="1991" name="Proc. Natl. Acad. Sci. U.S.A.">
        <title>Identification and characterization of rat intestinal trefoil factor: tissue- and cell-specific member of the trefoil protein family.</title>
        <authorList>
            <person name="Suemori S."/>
            <person name="Lynch-Devaney K."/>
            <person name="Podolsky D.K."/>
        </authorList>
    </citation>
    <scope>NUCLEOTIDE SEQUENCE [MRNA]</scope>
    <scope>SUBCELLULAR LOCATION</scope>
    <scope>TISSUE SPECIFICITY</scope>
    <source>
        <tissue>Intestine</tissue>
    </source>
</reference>
<reference key="2">
    <citation type="journal article" date="1992" name="Scand. J. Gastroenterol. Suppl.">
        <title>Trefoil peptide expression in intestinal adaptation and renewal.</title>
        <authorList>
            <person name="Poulsom R."/>
            <person name="Chinery R."/>
            <person name="Sarraf C."/>
            <person name="Lalani E.N."/>
            <person name="Stamp G."/>
            <person name="Elia G."/>
            <person name="Wright N."/>
        </authorList>
    </citation>
    <scope>NUCLEOTIDE SEQUENCE [MRNA]</scope>
</reference>
<reference key="3">
    <citation type="journal article" date="1995" name="Brain Res. Mol. Brain Res.">
        <title>Molecular and cellular analysis of rP1.B in the rat hypothalamus: in situ hybridization and immunohistochemistry of a new P-domain neuropeptide.</title>
        <authorList>
            <person name="Probst J.C."/>
            <person name="Skutella T."/>
            <person name="Mueller-Schmid A."/>
            <person name="Jirikowski G.F."/>
            <person name="Hoffmann W."/>
        </authorList>
    </citation>
    <scope>NUCLEOTIDE SEQUENCE [MRNA]</scope>
    <scope>TISSUE SPECIFICITY</scope>
    <source>
        <strain>Wistar</strain>
        <tissue>Brain</tissue>
    </source>
</reference>
<reference key="4">
    <citation type="journal article" date="2004" name="Genome Res.">
        <title>The status, quality, and expansion of the NIH full-length cDNA project: the Mammalian Gene Collection (MGC).</title>
        <authorList>
            <consortium name="The MGC Project Team"/>
        </authorList>
    </citation>
    <scope>NUCLEOTIDE SEQUENCE [LARGE SCALE MRNA]</scope>
    <source>
        <tissue>Kidney</tissue>
    </source>
</reference>
<reference key="5">
    <citation type="journal article" date="1992" name="Biochem. J.">
        <title>Localization of intestinal trefoil-factor mRNA in rat stomach and intestine by hybridization in situ.</title>
        <authorList>
            <person name="Chinery R."/>
            <person name="Poulson R."/>
            <person name="Rogers L.A."/>
            <person name="Jeffery R.E."/>
            <person name="Longcroft J.M."/>
            <person name="Hanby A.M."/>
            <person name="Wright N.A."/>
        </authorList>
    </citation>
    <scope>NUCLEOTIDE SEQUENCE [MRNA] OF 1-80</scope>
    <scope>TISSUE SPECIFICITY</scope>
    <source>
        <strain>Wistar</strain>
        <tissue>Ileum</tissue>
    </source>
</reference>
<reference key="6">
    <citation type="journal article" date="1995" name="J. Biol. Chem.">
        <title>Molecular cloning of the rat intestinal trefoil factor gene. Characterization of an intestinal goblet cell-associated promoter.</title>
        <authorList>
            <person name="Sands B.E."/>
            <person name="Ogata H."/>
            <person name="Lynch-Devaney K."/>
            <person name="Debeaumont M."/>
            <person name="Ezzell R.M."/>
            <person name="Podolsky D.K."/>
        </authorList>
    </citation>
    <scope>NUCLEOTIDE SEQUENCE [GENOMIC DNA] OF 1-28</scope>
    <source>
        <strain>Sprague-Dawley</strain>
    </source>
</reference>
<reference key="7">
    <citation type="journal article" date="1997" name="Biochem. Biophys. Res. Commun.">
        <title>Characterization of a putative receptor for intestinal trefoil factor in rat small intestine: identification by in situ binding and ligand blotting.</title>
        <authorList>
            <person name="Tan X.D."/>
            <person name="Hsueh W."/>
            <person name="Chang H."/>
            <person name="Wei K.-R."/>
            <person name="Gonzalez-Crussi F."/>
        </authorList>
    </citation>
    <scope>NUCLEOTIDE SEQUENCE [MRNA] OF 22-81</scope>
    <scope>SUBCELLULAR LOCATION</scope>
    <source>
        <strain>Sprague-Dawley</strain>
        <tissue>Small intestine</tissue>
    </source>
</reference>
<reference key="8">
    <citation type="journal article" date="1993" name="J. Biol. Chem.">
        <title>Identification of human intestinal trefoil factor. Goblet cell-specific expression of a peptide targeted for apical secretion.</title>
        <authorList>
            <person name="Podolsky D.K."/>
            <person name="Lynch-Devaney K."/>
            <person name="Stow J.L."/>
            <person name="Oates P."/>
            <person name="Murgue B."/>
            <person name="Debeaumont M."/>
            <person name="Sands B.E."/>
            <person name="Mahida Y.R."/>
        </authorList>
    </citation>
    <scope>TISSUE SPECIFICITY</scope>
</reference>
<reference key="9">
    <citation type="journal article" date="2009" name="Br. J. Pharmacol.">
        <title>Induction of trefoil factor (TFF)1, TFF2 and TFF3 by hypoxia is mediated by hypoxia inducible factor-1: implications for gastric mucosal healing.</title>
        <authorList>
            <person name="Hernandez C."/>
            <person name="Santamatilde E."/>
            <person name="McCreath K.J."/>
            <person name="Cervera A.M."/>
            <person name="Diez I."/>
            <person name="Ortiz-Masia D."/>
            <person name="Martinez N."/>
            <person name="Calatayud S."/>
            <person name="Esplugues J.V."/>
            <person name="Barrachina M.D."/>
        </authorList>
    </citation>
    <scope>INDUCTION</scope>
    <scope>TISSUE SPECIFICITY</scope>
</reference>
<keyword id="KW-0963">Cytoplasm</keyword>
<keyword id="KW-1015">Disulfide bond</keyword>
<keyword id="KW-0272">Extracellular matrix</keyword>
<keyword id="KW-1185">Reference proteome</keyword>
<keyword id="KW-0964">Secreted</keyword>
<keyword id="KW-0732">Signal</keyword>
<proteinExistence type="evidence at protein level"/>
<comment type="function">
    <text evidence="1">Involved in the maintenance and repair of the intestinal mucosa. Promotes the mobility of epithelial cells in healing processes (motogen) (By similarity).</text>
</comment>
<comment type="subunit">
    <text evidence="1">Monomer. Homodimer; disulfide-linked.</text>
</comment>
<comment type="subcellular location">
    <subcellularLocation>
        <location evidence="6 10">Secreted</location>
        <location evidence="6 10">Extracellular space</location>
        <location evidence="6 10">Extracellular matrix</location>
    </subcellularLocation>
    <subcellularLocation>
        <location evidence="2">Cytoplasm</location>
    </subcellularLocation>
</comment>
<comment type="tissue specificity">
    <text evidence="5 6 7 8 9">Expressed in goblet cells of the intestines, and colon, in paraventricular hypothalamus and supraoptic nuclei. Weakly expressed in gastric epithelial cells (at protein level). Expressed by goblet cells of small and large intestinal epithelia, kidney and stomach. Expressed in the paraventricular hypothalamus, arcuate nucleus and amygdala of the brain. Weakly expressed in gastric epithelial cells.</text>
</comment>
<comment type="induction">
    <text evidence="7">Up-regulated by hypoxia in gastric epithelial cells. Up-regulated by hypoxia-inducible factor 1 alpha (HIF1A).</text>
</comment>
<protein>
    <recommendedName>
        <fullName>Trefoil factor 3</fullName>
    </recommendedName>
    <alternativeName>
        <fullName>Intestinal trefoil factor</fullName>
        <shortName>rITF</shortName>
    </alternativeName>
    <alternativeName>
        <fullName>Polypeptide P1.B</fullName>
        <shortName>rP1.B</shortName>
    </alternativeName>
</protein>
<evidence type="ECO:0000250" key="1"/>
<evidence type="ECO:0000250" key="2">
    <source>
        <dbReference type="UniProtKB" id="Q07654"/>
    </source>
</evidence>
<evidence type="ECO:0000255" key="3"/>
<evidence type="ECO:0000255" key="4">
    <source>
        <dbReference type="PROSITE-ProRule" id="PRU00779"/>
    </source>
</evidence>
<evidence type="ECO:0000269" key="5">
    <source>
    </source>
</evidence>
<evidence type="ECO:0000269" key="6">
    <source>
    </source>
</evidence>
<evidence type="ECO:0000269" key="7">
    <source>
    </source>
</evidence>
<evidence type="ECO:0000269" key="8">
    <source>
    </source>
</evidence>
<evidence type="ECO:0000269" key="9">
    <source>
    </source>
</evidence>
<evidence type="ECO:0000269" key="10">
    <source>
    </source>
</evidence>
<evidence type="ECO:0000305" key="11"/>
<accession>Q03191</accession>
<accession>Q68FZ2</accession>